<name>RHAR_SALPK</name>
<accession>B5BJG9</accession>
<comment type="function">
    <text evidence="1">Activates expression of the rhaSR operon in response to L-rhamnose.</text>
</comment>
<comment type="subunit">
    <text evidence="1">Binds DNA as a dimer.</text>
</comment>
<comment type="subcellular location">
    <subcellularLocation>
        <location evidence="1">Cytoplasm</location>
    </subcellularLocation>
</comment>
<keyword id="KW-0010">Activator</keyword>
<keyword id="KW-0963">Cytoplasm</keyword>
<keyword id="KW-0238">DNA-binding</keyword>
<keyword id="KW-0677">Repeat</keyword>
<keyword id="KW-0684">Rhamnose metabolism</keyword>
<keyword id="KW-0804">Transcription</keyword>
<keyword id="KW-0805">Transcription regulation</keyword>
<organism>
    <name type="scientific">Salmonella paratyphi A (strain AKU_12601)</name>
    <dbReference type="NCBI Taxonomy" id="554290"/>
    <lineage>
        <taxon>Bacteria</taxon>
        <taxon>Pseudomonadati</taxon>
        <taxon>Pseudomonadota</taxon>
        <taxon>Gammaproteobacteria</taxon>
        <taxon>Enterobacterales</taxon>
        <taxon>Enterobacteriaceae</taxon>
        <taxon>Salmonella</taxon>
    </lineage>
</organism>
<gene>
    <name evidence="1" type="primary">rhaR</name>
    <name type="ordered locus">SSPA3620</name>
</gene>
<feature type="chain" id="PRO_1000200943" description="HTH-type transcriptional activator RhaR">
    <location>
        <begin position="1"/>
        <end position="282"/>
    </location>
</feature>
<feature type="domain" description="HTH araC/xylS-type" evidence="1">
    <location>
        <begin position="179"/>
        <end position="277"/>
    </location>
</feature>
<feature type="DNA-binding region" description="H-T-H motif" evidence="1">
    <location>
        <begin position="196"/>
        <end position="217"/>
    </location>
</feature>
<feature type="DNA-binding region" description="H-T-H motif" evidence="1">
    <location>
        <begin position="244"/>
        <end position="267"/>
    </location>
</feature>
<feature type="site" description="Interaction with sigma-70" evidence="1">
    <location>
        <position position="246"/>
    </location>
</feature>
<dbReference type="EMBL" id="FM200053">
    <property type="protein sequence ID" value="CAR61902.1"/>
    <property type="molecule type" value="Genomic_DNA"/>
</dbReference>
<dbReference type="RefSeq" id="WP_000013290.1">
    <property type="nucleotide sequence ID" value="NC_011147.1"/>
</dbReference>
<dbReference type="SMR" id="B5BJG9"/>
<dbReference type="KEGG" id="sek:SSPA3620"/>
<dbReference type="HOGENOM" id="CLU_000445_88_5_6"/>
<dbReference type="Proteomes" id="UP000001869">
    <property type="component" value="Chromosome"/>
</dbReference>
<dbReference type="GO" id="GO:0005737">
    <property type="term" value="C:cytoplasm"/>
    <property type="evidence" value="ECO:0007669"/>
    <property type="project" value="UniProtKB-SubCell"/>
</dbReference>
<dbReference type="GO" id="GO:0003700">
    <property type="term" value="F:DNA-binding transcription factor activity"/>
    <property type="evidence" value="ECO:0007669"/>
    <property type="project" value="UniProtKB-UniRule"/>
</dbReference>
<dbReference type="GO" id="GO:0043565">
    <property type="term" value="F:sequence-specific DNA binding"/>
    <property type="evidence" value="ECO:0007669"/>
    <property type="project" value="InterPro"/>
</dbReference>
<dbReference type="GO" id="GO:0045893">
    <property type="term" value="P:positive regulation of DNA-templated transcription"/>
    <property type="evidence" value="ECO:0007669"/>
    <property type="project" value="UniProtKB-UniRule"/>
</dbReference>
<dbReference type="GO" id="GO:0019299">
    <property type="term" value="P:rhamnose metabolic process"/>
    <property type="evidence" value="ECO:0007669"/>
    <property type="project" value="UniProtKB-UniRule"/>
</dbReference>
<dbReference type="CDD" id="cd06977">
    <property type="entry name" value="cupin_RhaR_RhaS-like_N"/>
    <property type="match status" value="1"/>
</dbReference>
<dbReference type="Gene3D" id="1.10.10.60">
    <property type="entry name" value="Homeodomain-like"/>
    <property type="match status" value="2"/>
</dbReference>
<dbReference type="Gene3D" id="2.60.120.10">
    <property type="entry name" value="Jelly Rolls"/>
    <property type="match status" value="1"/>
</dbReference>
<dbReference type="HAMAP" id="MF_01533">
    <property type="entry name" value="HTH_type_RhaR"/>
    <property type="match status" value="1"/>
</dbReference>
<dbReference type="InterPro" id="IPR003313">
    <property type="entry name" value="AraC-bd"/>
</dbReference>
<dbReference type="InterPro" id="IPR009057">
    <property type="entry name" value="Homeodomain-like_sf"/>
</dbReference>
<dbReference type="InterPro" id="IPR018060">
    <property type="entry name" value="HTH_AraC"/>
</dbReference>
<dbReference type="InterPro" id="IPR018062">
    <property type="entry name" value="HTH_AraC-typ_CS"/>
</dbReference>
<dbReference type="InterPro" id="IPR047220">
    <property type="entry name" value="RhaR_RhaS-like_N"/>
</dbReference>
<dbReference type="InterPro" id="IPR014710">
    <property type="entry name" value="RmlC-like_jellyroll"/>
</dbReference>
<dbReference type="InterPro" id="IPR011051">
    <property type="entry name" value="RmlC_Cupin_sf"/>
</dbReference>
<dbReference type="InterPro" id="IPR023699">
    <property type="entry name" value="Tscrpt_act_RhaR"/>
</dbReference>
<dbReference type="InterPro" id="IPR020449">
    <property type="entry name" value="Tscrpt_reg_AraC-type_HTH"/>
</dbReference>
<dbReference type="NCBIfam" id="NF010025">
    <property type="entry name" value="PRK13500.1"/>
    <property type="match status" value="1"/>
</dbReference>
<dbReference type="NCBIfam" id="NF010026">
    <property type="entry name" value="PRK13501.1"/>
    <property type="match status" value="1"/>
</dbReference>
<dbReference type="NCBIfam" id="NF010027">
    <property type="entry name" value="PRK13502.1"/>
    <property type="match status" value="1"/>
</dbReference>
<dbReference type="PANTHER" id="PTHR43280">
    <property type="entry name" value="ARAC-FAMILY TRANSCRIPTIONAL REGULATOR"/>
    <property type="match status" value="1"/>
</dbReference>
<dbReference type="PANTHER" id="PTHR43280:SF13">
    <property type="entry name" value="HTH-TYPE TRANSCRIPTIONAL ACTIVATOR RHAR"/>
    <property type="match status" value="1"/>
</dbReference>
<dbReference type="Pfam" id="PF02311">
    <property type="entry name" value="AraC_binding"/>
    <property type="match status" value="1"/>
</dbReference>
<dbReference type="Pfam" id="PF12833">
    <property type="entry name" value="HTH_18"/>
    <property type="match status" value="1"/>
</dbReference>
<dbReference type="PRINTS" id="PR00032">
    <property type="entry name" value="HTHARAC"/>
</dbReference>
<dbReference type="SMART" id="SM00342">
    <property type="entry name" value="HTH_ARAC"/>
    <property type="match status" value="1"/>
</dbReference>
<dbReference type="SUPFAM" id="SSF46689">
    <property type="entry name" value="Homeodomain-like"/>
    <property type="match status" value="1"/>
</dbReference>
<dbReference type="SUPFAM" id="SSF51182">
    <property type="entry name" value="RmlC-like cupins"/>
    <property type="match status" value="1"/>
</dbReference>
<dbReference type="PROSITE" id="PS00041">
    <property type="entry name" value="HTH_ARAC_FAMILY_1"/>
    <property type="match status" value="1"/>
</dbReference>
<dbReference type="PROSITE" id="PS01124">
    <property type="entry name" value="HTH_ARAC_FAMILY_2"/>
    <property type="match status" value="1"/>
</dbReference>
<protein>
    <recommendedName>
        <fullName evidence="1">HTH-type transcriptional activator RhaR</fullName>
    </recommendedName>
    <alternativeName>
        <fullName evidence="1">L-rhamnose operon transcriptional activator RhaR</fullName>
    </alternativeName>
</protein>
<evidence type="ECO:0000255" key="1">
    <source>
        <dbReference type="HAMAP-Rule" id="MF_01533"/>
    </source>
</evidence>
<reference key="1">
    <citation type="journal article" date="2009" name="BMC Genomics">
        <title>Pseudogene accumulation in the evolutionary histories of Salmonella enterica serovars Paratyphi A and Typhi.</title>
        <authorList>
            <person name="Holt K.E."/>
            <person name="Thomson N.R."/>
            <person name="Wain J."/>
            <person name="Langridge G.C."/>
            <person name="Hasan R."/>
            <person name="Bhutta Z.A."/>
            <person name="Quail M.A."/>
            <person name="Norbertczak H."/>
            <person name="Walker D."/>
            <person name="Simmonds M."/>
            <person name="White B."/>
            <person name="Bason N."/>
            <person name="Mungall K."/>
            <person name="Dougan G."/>
            <person name="Parkhill J."/>
        </authorList>
    </citation>
    <scope>NUCLEOTIDE SEQUENCE [LARGE SCALE GENOMIC DNA]</scope>
    <source>
        <strain>AKU_12601</strain>
    </source>
</reference>
<sequence length="282" mass="32858">MANQLILLKKDFFTDEQQAVTVADRYPQDVFAEHTHEFCELVMVWRGNGLHVLNERPYRITRGDLFYIRAEDKHSYTSVNDLVLQNIIYCPERLKLNVNWQAMIPGFQGAQWHPHWRLGSMGMNQARQVINQLEHESNGRDPLANEMAELLFGQLVMTLKRHRYATDDLPATSRETLLDKLITALANSLECPFALDAFCQQEQCSERVLRQQFRAQTGMTINQYLRQVRICHAQYLLQHSPLMISEISMQCGFEDSNYFSVVFTRETGMTPSQWRHLSNQSD</sequence>
<proteinExistence type="inferred from homology"/>